<gene>
    <name evidence="1" type="primary">hisI</name>
    <name type="ordered locus">CMS2014</name>
</gene>
<name>HIS3_CLASE</name>
<organism>
    <name type="scientific">Clavibacter sepedonicus</name>
    <name type="common">Clavibacter michiganensis subsp. sepedonicus</name>
    <dbReference type="NCBI Taxonomy" id="31964"/>
    <lineage>
        <taxon>Bacteria</taxon>
        <taxon>Bacillati</taxon>
        <taxon>Actinomycetota</taxon>
        <taxon>Actinomycetes</taxon>
        <taxon>Micrococcales</taxon>
        <taxon>Microbacteriaceae</taxon>
        <taxon>Clavibacter</taxon>
    </lineage>
</organism>
<sequence length="138" mass="14988">MSAAPLDPRGHGDPDVDGILARASFADDGLLPAVIQQHDTREVLMLGYMDREALRRTLTTGRVTFWSRSRSEYWRKGDTSGHGQYVRDAALDCDGDTVLVQVDQVGVACHTGTRTCFDADHLHPVTGARPAADEGPTP</sequence>
<dbReference type="EC" id="3.5.4.19" evidence="1"/>
<dbReference type="EMBL" id="AM849034">
    <property type="protein sequence ID" value="CAQ02111.1"/>
    <property type="molecule type" value="Genomic_DNA"/>
</dbReference>
<dbReference type="RefSeq" id="WP_012299340.1">
    <property type="nucleotide sequence ID" value="NZ_MZMN01000003.1"/>
</dbReference>
<dbReference type="SMR" id="B0REU6"/>
<dbReference type="STRING" id="31964.CMS2014"/>
<dbReference type="KEGG" id="cms:CMS2014"/>
<dbReference type="eggNOG" id="COG0139">
    <property type="taxonomic scope" value="Bacteria"/>
</dbReference>
<dbReference type="HOGENOM" id="CLU_048577_5_1_11"/>
<dbReference type="UniPathway" id="UPA00031">
    <property type="reaction ID" value="UER00008"/>
</dbReference>
<dbReference type="Proteomes" id="UP000001318">
    <property type="component" value="Chromosome"/>
</dbReference>
<dbReference type="GO" id="GO:0005737">
    <property type="term" value="C:cytoplasm"/>
    <property type="evidence" value="ECO:0007669"/>
    <property type="project" value="UniProtKB-SubCell"/>
</dbReference>
<dbReference type="GO" id="GO:0000287">
    <property type="term" value="F:magnesium ion binding"/>
    <property type="evidence" value="ECO:0007669"/>
    <property type="project" value="UniProtKB-UniRule"/>
</dbReference>
<dbReference type="GO" id="GO:0004635">
    <property type="term" value="F:phosphoribosyl-AMP cyclohydrolase activity"/>
    <property type="evidence" value="ECO:0007669"/>
    <property type="project" value="UniProtKB-UniRule"/>
</dbReference>
<dbReference type="GO" id="GO:0008270">
    <property type="term" value="F:zinc ion binding"/>
    <property type="evidence" value="ECO:0007669"/>
    <property type="project" value="UniProtKB-UniRule"/>
</dbReference>
<dbReference type="GO" id="GO:0000105">
    <property type="term" value="P:L-histidine biosynthetic process"/>
    <property type="evidence" value="ECO:0007669"/>
    <property type="project" value="UniProtKB-UniRule"/>
</dbReference>
<dbReference type="FunFam" id="3.10.20.810:FF:000001">
    <property type="entry name" value="Histidine biosynthesis bifunctional protein HisIE"/>
    <property type="match status" value="1"/>
</dbReference>
<dbReference type="Gene3D" id="3.10.20.810">
    <property type="entry name" value="Phosphoribosyl-AMP cyclohydrolase"/>
    <property type="match status" value="1"/>
</dbReference>
<dbReference type="HAMAP" id="MF_01021">
    <property type="entry name" value="HisI"/>
    <property type="match status" value="1"/>
</dbReference>
<dbReference type="InterPro" id="IPR026660">
    <property type="entry name" value="PRA-CH"/>
</dbReference>
<dbReference type="InterPro" id="IPR002496">
    <property type="entry name" value="PRib_AMP_CycHydrolase_dom"/>
</dbReference>
<dbReference type="InterPro" id="IPR038019">
    <property type="entry name" value="PRib_AMP_CycHydrolase_sf"/>
</dbReference>
<dbReference type="NCBIfam" id="NF000768">
    <property type="entry name" value="PRK00051.1"/>
    <property type="match status" value="1"/>
</dbReference>
<dbReference type="PANTHER" id="PTHR42945">
    <property type="entry name" value="HISTIDINE BIOSYNTHESIS BIFUNCTIONAL PROTEIN"/>
    <property type="match status" value="1"/>
</dbReference>
<dbReference type="PANTHER" id="PTHR42945:SF11">
    <property type="entry name" value="PHOSPHORIBOSYL-AMP CYCLOHYDROLASE"/>
    <property type="match status" value="1"/>
</dbReference>
<dbReference type="Pfam" id="PF01502">
    <property type="entry name" value="PRA-CH"/>
    <property type="match status" value="1"/>
</dbReference>
<dbReference type="SUPFAM" id="SSF141734">
    <property type="entry name" value="HisI-like"/>
    <property type="match status" value="1"/>
</dbReference>
<evidence type="ECO:0000255" key="1">
    <source>
        <dbReference type="HAMAP-Rule" id="MF_01021"/>
    </source>
</evidence>
<keyword id="KW-0028">Amino-acid biosynthesis</keyword>
<keyword id="KW-0963">Cytoplasm</keyword>
<keyword id="KW-0368">Histidine biosynthesis</keyword>
<keyword id="KW-0378">Hydrolase</keyword>
<keyword id="KW-0460">Magnesium</keyword>
<keyword id="KW-0479">Metal-binding</keyword>
<keyword id="KW-0862">Zinc</keyword>
<proteinExistence type="inferred from homology"/>
<comment type="function">
    <text evidence="1">Catalyzes the hydrolysis of the adenine ring of phosphoribosyl-AMP.</text>
</comment>
<comment type="catalytic activity">
    <reaction evidence="1">
        <text>1-(5-phospho-beta-D-ribosyl)-5'-AMP + H2O = 1-(5-phospho-beta-D-ribosyl)-5-[(5-phospho-beta-D-ribosylamino)methylideneamino]imidazole-4-carboxamide</text>
        <dbReference type="Rhea" id="RHEA:20049"/>
        <dbReference type="ChEBI" id="CHEBI:15377"/>
        <dbReference type="ChEBI" id="CHEBI:58435"/>
        <dbReference type="ChEBI" id="CHEBI:59457"/>
        <dbReference type="EC" id="3.5.4.19"/>
    </reaction>
</comment>
<comment type="cofactor">
    <cofactor evidence="1">
        <name>Mg(2+)</name>
        <dbReference type="ChEBI" id="CHEBI:18420"/>
    </cofactor>
    <text evidence="1">Binds 1 Mg(2+) ion per subunit.</text>
</comment>
<comment type="cofactor">
    <cofactor evidence="1">
        <name>Zn(2+)</name>
        <dbReference type="ChEBI" id="CHEBI:29105"/>
    </cofactor>
    <text evidence="1">Binds 1 zinc ion per subunit.</text>
</comment>
<comment type="pathway">
    <text evidence="1">Amino-acid biosynthesis; L-histidine biosynthesis; L-histidine from 5-phospho-alpha-D-ribose 1-diphosphate: step 3/9.</text>
</comment>
<comment type="subunit">
    <text evidence="1">Homodimer.</text>
</comment>
<comment type="subcellular location">
    <subcellularLocation>
        <location evidence="1">Cytoplasm</location>
    </subcellularLocation>
</comment>
<comment type="similarity">
    <text evidence="1">Belongs to the PRA-CH family.</text>
</comment>
<feature type="chain" id="PRO_1000084177" description="Phosphoribosyl-AMP cyclohydrolase">
    <location>
        <begin position="1"/>
        <end position="138"/>
    </location>
</feature>
<feature type="binding site" evidence="1">
    <location>
        <position position="92"/>
    </location>
    <ligand>
        <name>Mg(2+)</name>
        <dbReference type="ChEBI" id="CHEBI:18420"/>
    </ligand>
</feature>
<feature type="binding site" evidence="1">
    <location>
        <position position="93"/>
    </location>
    <ligand>
        <name>Zn(2+)</name>
        <dbReference type="ChEBI" id="CHEBI:29105"/>
        <note>ligand shared between dimeric partners</note>
    </ligand>
</feature>
<feature type="binding site" evidence="1">
    <location>
        <position position="94"/>
    </location>
    <ligand>
        <name>Mg(2+)</name>
        <dbReference type="ChEBI" id="CHEBI:18420"/>
    </ligand>
</feature>
<feature type="binding site" evidence="1">
    <location>
        <position position="96"/>
    </location>
    <ligand>
        <name>Mg(2+)</name>
        <dbReference type="ChEBI" id="CHEBI:18420"/>
    </ligand>
</feature>
<feature type="binding site" evidence="1">
    <location>
        <position position="109"/>
    </location>
    <ligand>
        <name>Zn(2+)</name>
        <dbReference type="ChEBI" id="CHEBI:29105"/>
        <note>ligand shared between dimeric partners</note>
    </ligand>
</feature>
<feature type="binding site" evidence="1">
    <location>
        <position position="116"/>
    </location>
    <ligand>
        <name>Zn(2+)</name>
        <dbReference type="ChEBI" id="CHEBI:29105"/>
        <note>ligand shared between dimeric partners</note>
    </ligand>
</feature>
<reference key="1">
    <citation type="journal article" date="2008" name="J. Bacteriol.">
        <title>Genome of the actinomycete plant pathogen Clavibacter michiganensis subsp. sepedonicus suggests recent niche adaptation.</title>
        <authorList>
            <person name="Bentley S.D."/>
            <person name="Corton C."/>
            <person name="Brown S.E."/>
            <person name="Barron A."/>
            <person name="Clark L."/>
            <person name="Doggett J."/>
            <person name="Harris B."/>
            <person name="Ormond D."/>
            <person name="Quail M.A."/>
            <person name="May G."/>
            <person name="Francis D."/>
            <person name="Knudson D."/>
            <person name="Parkhill J."/>
            <person name="Ishimaru C.A."/>
        </authorList>
    </citation>
    <scope>NUCLEOTIDE SEQUENCE [LARGE SCALE GENOMIC DNA]</scope>
    <source>
        <strain>ATCC 33113 / DSM 20744 / JCM 9667 / LMG 2889 / ICMP 2535 / C-1</strain>
    </source>
</reference>
<accession>B0REU6</accession>
<protein>
    <recommendedName>
        <fullName evidence="1">Phosphoribosyl-AMP cyclohydrolase</fullName>
        <shortName evidence="1">PRA-CH</shortName>
        <ecNumber evidence="1">3.5.4.19</ecNumber>
    </recommendedName>
</protein>